<name>PPAF2_IPOBA</name>
<gene>
    <name type="primary">PAP2</name>
</gene>
<protein>
    <recommendedName>
        <fullName>Purple acid phosphatase 2</fullName>
        <ecNumber>3.1.3.2</ecNumber>
    </recommendedName>
    <alternativeName>
        <fullName>Manganese(II) purple acid phosphatase 2</fullName>
    </alternativeName>
</protein>
<dbReference type="EC" id="3.1.3.2"/>
<dbReference type="EMBL" id="AF200826">
    <property type="protein sequence ID" value="AAF19822.1"/>
    <property type="molecule type" value="mRNA"/>
</dbReference>
<dbReference type="PIR" id="T51095">
    <property type="entry name" value="T51095"/>
</dbReference>
<dbReference type="SMR" id="Q9SDZ9"/>
<dbReference type="GlyCosmos" id="Q9SDZ9">
    <property type="glycosylation" value="6 sites, No reported glycans"/>
</dbReference>
<dbReference type="BioCyc" id="MetaCyc:MONOMER-15154"/>
<dbReference type="GO" id="GO:0005576">
    <property type="term" value="C:extracellular region"/>
    <property type="evidence" value="ECO:0007669"/>
    <property type="project" value="UniProtKB-SubCell"/>
</dbReference>
<dbReference type="GO" id="GO:0003993">
    <property type="term" value="F:acid phosphatase activity"/>
    <property type="evidence" value="ECO:0007669"/>
    <property type="project" value="UniProtKB-EC"/>
</dbReference>
<dbReference type="GO" id="GO:0046872">
    <property type="term" value="F:metal ion binding"/>
    <property type="evidence" value="ECO:0007669"/>
    <property type="project" value="UniProtKB-KW"/>
</dbReference>
<dbReference type="CDD" id="cd00839">
    <property type="entry name" value="MPP_PAPs"/>
    <property type="match status" value="1"/>
</dbReference>
<dbReference type="FunFam" id="2.60.40.380:FF:000001">
    <property type="entry name" value="Fe(3+)-Zn(2+) purple acid phosphatase"/>
    <property type="match status" value="1"/>
</dbReference>
<dbReference type="FunFam" id="3.60.21.10:FF:000034">
    <property type="entry name" value="Fe(3+)-Zn(2+) purple acid phosphatase"/>
    <property type="match status" value="1"/>
</dbReference>
<dbReference type="Gene3D" id="3.60.21.10">
    <property type="match status" value="1"/>
</dbReference>
<dbReference type="Gene3D" id="2.60.40.380">
    <property type="entry name" value="Purple acid phosphatase-like, N-terminal"/>
    <property type="match status" value="1"/>
</dbReference>
<dbReference type="InterPro" id="IPR004843">
    <property type="entry name" value="Calcineurin-like_PHP_ApaH"/>
</dbReference>
<dbReference type="InterPro" id="IPR029052">
    <property type="entry name" value="Metallo-depent_PP-like"/>
</dbReference>
<dbReference type="InterPro" id="IPR041792">
    <property type="entry name" value="MPP_PAP"/>
</dbReference>
<dbReference type="InterPro" id="IPR039331">
    <property type="entry name" value="PPA-like"/>
</dbReference>
<dbReference type="InterPro" id="IPR008963">
    <property type="entry name" value="Purple_acid_Pase-like_N"/>
</dbReference>
<dbReference type="InterPro" id="IPR015914">
    <property type="entry name" value="Purple_acid_Pase_N"/>
</dbReference>
<dbReference type="InterPro" id="IPR025733">
    <property type="entry name" value="Purple_acid_PPase_C_dom"/>
</dbReference>
<dbReference type="PANTHER" id="PTHR22953">
    <property type="entry name" value="ACID PHOSPHATASE RELATED"/>
    <property type="match status" value="1"/>
</dbReference>
<dbReference type="PANTHER" id="PTHR22953:SF86">
    <property type="entry name" value="PURPLE ACID PHOSPHATASE 10"/>
    <property type="match status" value="1"/>
</dbReference>
<dbReference type="Pfam" id="PF00149">
    <property type="entry name" value="Metallophos"/>
    <property type="match status" value="1"/>
</dbReference>
<dbReference type="Pfam" id="PF14008">
    <property type="entry name" value="Metallophos_C"/>
    <property type="match status" value="1"/>
</dbReference>
<dbReference type="Pfam" id="PF16656">
    <property type="entry name" value="Pur_ac_phosph_N"/>
    <property type="match status" value="1"/>
</dbReference>
<dbReference type="SUPFAM" id="SSF56300">
    <property type="entry name" value="Metallo-dependent phosphatases"/>
    <property type="match status" value="1"/>
</dbReference>
<dbReference type="SUPFAM" id="SSF49363">
    <property type="entry name" value="Purple acid phosphatase, N-terminal domain"/>
    <property type="match status" value="1"/>
</dbReference>
<organism>
    <name type="scientific">Ipomoea batatas</name>
    <name type="common">Sweet potato</name>
    <name type="synonym">Convolvulus batatas</name>
    <dbReference type="NCBI Taxonomy" id="4120"/>
    <lineage>
        <taxon>Eukaryota</taxon>
        <taxon>Viridiplantae</taxon>
        <taxon>Streptophyta</taxon>
        <taxon>Embryophyta</taxon>
        <taxon>Tracheophyta</taxon>
        <taxon>Spermatophyta</taxon>
        <taxon>Magnoliopsida</taxon>
        <taxon>eudicotyledons</taxon>
        <taxon>Gunneridae</taxon>
        <taxon>Pentapetalae</taxon>
        <taxon>asterids</taxon>
        <taxon>lamiids</taxon>
        <taxon>Solanales</taxon>
        <taxon>Convolvulaceae</taxon>
        <taxon>Ipomoeeae</taxon>
        <taxon>Ipomoea</taxon>
    </lineage>
</organism>
<sequence>MGASRTGCYLLAVVLAAVMNAAIAGITSSFIRKVEKTVDMPLDSDVFRVPPGYNAPQQVHITQGDHVGKAMIVSWVTVDEPGSSKVVYWSENSQHKKVARGNIRTYTYFNYTSGYIHHCTIRNLEYNTKYYYEVGIGNTTRSFWFTTPPEVGPDVPYTFGLIGDLGQSFDSNRTLTHYERNPIKGQAVLFVGDLSYADNYPNHDNVRWDTWGRFVERSTAYQPWIWTAGNHEIDFAPEIGETKPFKPFTKRYHVPYKASGSTETFWYPIKRASAYIIVLSSYSAYGKYTPQYKWLEEELPKVNRTETPWLIVLMHSPWYNSYNYHYMEGETMRVMYEPWFVQHKVDLVFAGHVHAYERSERVSNVAYDIVNGKCTPVRDQSAPVYITIGDGGNLEGLATNMTDPQPEYSAFREASFGHATLDIKNRTHAYYSWHRNQDGYAVEADSMWVSNRFWHPVDDSTTTKL</sequence>
<accession>Q9SDZ9</accession>
<keyword id="KW-1015">Disulfide bond</keyword>
<keyword id="KW-0325">Glycoprotein</keyword>
<keyword id="KW-0378">Hydrolase</keyword>
<keyword id="KW-0408">Iron</keyword>
<keyword id="KW-0479">Metal-binding</keyword>
<keyword id="KW-0964">Secreted</keyword>
<keyword id="KW-0732">Signal</keyword>
<keyword id="KW-0862">Zinc</keyword>
<proteinExistence type="evidence at protein level"/>
<feature type="signal peptide" evidence="2">
    <location>
        <begin position="1"/>
        <end position="32"/>
    </location>
</feature>
<feature type="chain" id="PRO_5000057352" description="Purple acid phosphatase 2">
    <location>
        <begin position="33"/>
        <end position="465"/>
    </location>
</feature>
<feature type="active site" description="Proton donor" evidence="1">
    <location>
        <position position="325"/>
    </location>
</feature>
<feature type="binding site" evidence="1">
    <location>
        <position position="164"/>
    </location>
    <ligand>
        <name>Fe cation</name>
        <dbReference type="ChEBI" id="CHEBI:24875"/>
    </ligand>
</feature>
<feature type="binding site" evidence="1">
    <location>
        <position position="193"/>
    </location>
    <ligand>
        <name>Fe cation</name>
        <dbReference type="ChEBI" id="CHEBI:24875"/>
    </ligand>
</feature>
<feature type="binding site" evidence="1">
    <location>
        <position position="193"/>
    </location>
    <ligand>
        <name>Mn(2+)</name>
        <dbReference type="ChEBI" id="CHEBI:29035"/>
    </ligand>
</feature>
<feature type="binding site" evidence="1">
    <location>
        <position position="196"/>
    </location>
    <ligand>
        <name>Fe cation</name>
        <dbReference type="ChEBI" id="CHEBI:24875"/>
    </ligand>
</feature>
<feature type="binding site" evidence="1">
    <location>
        <position position="230"/>
    </location>
    <ligand>
        <name>Mn(2+)</name>
        <dbReference type="ChEBI" id="CHEBI:29035"/>
    </ligand>
</feature>
<feature type="binding site" evidence="1">
    <location>
        <position position="230"/>
    </location>
    <ligand>
        <name>substrate</name>
    </ligand>
</feature>
<feature type="binding site" evidence="1">
    <location>
        <position position="315"/>
    </location>
    <ligand>
        <name>Mn(2+)</name>
        <dbReference type="ChEBI" id="CHEBI:29035"/>
    </ligand>
</feature>
<feature type="binding site" evidence="1">
    <location>
        <begin position="352"/>
        <end position="354"/>
    </location>
    <ligand>
        <name>substrate</name>
    </ligand>
</feature>
<feature type="binding site" evidence="1">
    <location>
        <position position="352"/>
    </location>
    <ligand>
        <name>Mn(2+)</name>
        <dbReference type="ChEBI" id="CHEBI:29035"/>
    </ligand>
</feature>
<feature type="binding site" evidence="1">
    <location>
        <position position="354"/>
    </location>
    <ligand>
        <name>Fe cation</name>
        <dbReference type="ChEBI" id="CHEBI:24875"/>
    </ligand>
</feature>
<feature type="glycosylation site" description="N-linked (GlcNAc...) asparagine" evidence="2">
    <location>
        <position position="110"/>
    </location>
</feature>
<feature type="glycosylation site" description="N-linked (GlcNAc...) asparagine" evidence="2">
    <location>
        <position position="138"/>
    </location>
</feature>
<feature type="glycosylation site" description="N-linked (GlcNAc...) asparagine" evidence="2">
    <location>
        <position position="172"/>
    </location>
</feature>
<feature type="glycosylation site" description="N-linked (GlcNAc...) asparagine" evidence="2">
    <location>
        <position position="303"/>
    </location>
</feature>
<feature type="glycosylation site" description="N-linked (GlcNAc...) asparagine" evidence="2">
    <location>
        <position position="400"/>
    </location>
</feature>
<feature type="glycosylation site" description="N-linked (GlcNAc...) asparagine" evidence="2">
    <location>
        <position position="425"/>
    </location>
</feature>
<feature type="disulfide bond" description="Interchain" evidence="1">
    <location>
        <position position="374"/>
    </location>
</feature>
<reference key="1">
    <citation type="journal article" date="1999" name="Arch. Biochem. Biophys.">
        <title>Binuclear metal centers in plant purple acid phosphatases: Fe-Mn in sweet potato and Fe-Zn in soybean.</title>
        <authorList>
            <person name="Schenk G."/>
            <person name="Ge Y."/>
            <person name="Carrington L.E."/>
            <person name="Wynne C.J."/>
            <person name="Searle I.R."/>
            <person name="Carroll B.J."/>
            <person name="Hamilton S."/>
            <person name="de Jersey J."/>
        </authorList>
    </citation>
    <scope>NUCLEOTIDE SEQUENCE [MRNA]</scope>
    <scope>CATALYTIC ACTIVITY</scope>
    <scope>COFACTOR</scope>
    <scope>BIOPHYSICOCHEMICAL PROPERTIES</scope>
    <source>
        <strain>cv. Golden</strain>
    </source>
</reference>
<evidence type="ECO:0000250" key="1"/>
<evidence type="ECO:0000255" key="2"/>
<evidence type="ECO:0000269" key="3">
    <source>
    </source>
</evidence>
<evidence type="ECO:0000305" key="4"/>
<comment type="catalytic activity">
    <reaction evidence="3">
        <text>a phosphate monoester + H2O = an alcohol + phosphate</text>
        <dbReference type="Rhea" id="RHEA:15017"/>
        <dbReference type="ChEBI" id="CHEBI:15377"/>
        <dbReference type="ChEBI" id="CHEBI:30879"/>
        <dbReference type="ChEBI" id="CHEBI:43474"/>
        <dbReference type="ChEBI" id="CHEBI:67140"/>
        <dbReference type="EC" id="3.1.3.2"/>
    </reaction>
</comment>
<comment type="cofactor">
    <cofactor evidence="1">
        <name>Fe cation</name>
        <dbReference type="ChEBI" id="CHEBI:24875"/>
    </cofactor>
    <text evidence="1">Binds 1 Fe cation per subunit.</text>
</comment>
<comment type="cofactor">
    <cofactor evidence="3">
        <name>Mn(2+)</name>
        <dbReference type="ChEBI" id="CHEBI:29035"/>
    </cofactor>
    <cofactor evidence="3">
        <name>Zn(2+)</name>
        <dbReference type="ChEBI" id="CHEBI:29105"/>
    </cofactor>
    <cofactor evidence="3">
        <name>Cu(2+)</name>
        <dbReference type="ChEBI" id="CHEBI:29036"/>
    </cofactor>
    <cofactor evidence="3">
        <name>Mg(2+)</name>
        <dbReference type="ChEBI" id="CHEBI:18420"/>
    </cofactor>
    <text evidence="3">Binds 1 Mn(2+) ion per subunit. Can also use Zn(2+), Cu(2+) and Mg(2+) ions.</text>
</comment>
<comment type="biophysicochemical properties">
    <absorption>
        <max evidence="3">560 nm</max>
    </absorption>
    <kinetics>
        <KM evidence="3">95 uM for p-NPP (at pH 4.9 and 25 degrees Celsius)</KM>
        <KM evidence="3">120 uM for ATP (at pH 4.9 and 25 degrees Celsius)</KM>
        <KM evidence="3">180 uM for ADP (at pH 4.9 and 25 degrees Celsius)</KM>
        <KM evidence="3">360 uM for AMP (at pH 4.9 and 25 degrees Celsius)</KM>
        <KM evidence="3">75 uM for pyrophosphate (at pH 4.9 and 25 degrees Celsius)</KM>
        <KM evidence="3">490 uM for beta-glycerophosphate (at pH 4.9 and 25 degrees Celsius)</KM>
    </kinetics>
</comment>
<comment type="subunit">
    <text evidence="1">Homodimer; disulfide-linked.</text>
</comment>
<comment type="subcellular location">
    <subcellularLocation>
        <location evidence="1">Secreted</location>
    </subcellularLocation>
</comment>
<comment type="similarity">
    <text evidence="4">Belongs to the metallophosphoesterase superfamily. Purple acid phosphatase family.</text>
</comment>